<organism>
    <name type="scientific">Methylobacillus flagellatus (strain ATCC 51484 / DSM 6875 / VKM B-1610 / KT)</name>
    <dbReference type="NCBI Taxonomy" id="265072"/>
    <lineage>
        <taxon>Bacteria</taxon>
        <taxon>Pseudomonadati</taxon>
        <taxon>Pseudomonadota</taxon>
        <taxon>Betaproteobacteria</taxon>
        <taxon>Nitrosomonadales</taxon>
        <taxon>Methylophilaceae</taxon>
        <taxon>Methylobacillus</taxon>
    </lineage>
</organism>
<dbReference type="EC" id="7.1.1.-" evidence="1"/>
<dbReference type="EMBL" id="CP000284">
    <property type="protein sequence ID" value="ABE50321.1"/>
    <property type="molecule type" value="Genomic_DNA"/>
</dbReference>
<dbReference type="RefSeq" id="WP_011480275.1">
    <property type="nucleotide sequence ID" value="NC_007947.1"/>
</dbReference>
<dbReference type="SMR" id="Q1GZL6"/>
<dbReference type="STRING" id="265072.Mfla_2054"/>
<dbReference type="KEGG" id="mfa:Mfla_2054"/>
<dbReference type="eggNOG" id="COG1005">
    <property type="taxonomic scope" value="Bacteria"/>
</dbReference>
<dbReference type="HOGENOM" id="CLU_015134_0_1_4"/>
<dbReference type="OrthoDB" id="9803734at2"/>
<dbReference type="Proteomes" id="UP000002440">
    <property type="component" value="Chromosome"/>
</dbReference>
<dbReference type="GO" id="GO:0005886">
    <property type="term" value="C:plasma membrane"/>
    <property type="evidence" value="ECO:0007669"/>
    <property type="project" value="UniProtKB-SubCell"/>
</dbReference>
<dbReference type="GO" id="GO:0003954">
    <property type="term" value="F:NADH dehydrogenase activity"/>
    <property type="evidence" value="ECO:0007669"/>
    <property type="project" value="TreeGrafter"/>
</dbReference>
<dbReference type="GO" id="GO:0016655">
    <property type="term" value="F:oxidoreductase activity, acting on NAD(P)H, quinone or similar compound as acceptor"/>
    <property type="evidence" value="ECO:0007669"/>
    <property type="project" value="UniProtKB-UniRule"/>
</dbReference>
<dbReference type="GO" id="GO:0048038">
    <property type="term" value="F:quinone binding"/>
    <property type="evidence" value="ECO:0007669"/>
    <property type="project" value="UniProtKB-KW"/>
</dbReference>
<dbReference type="GO" id="GO:0009060">
    <property type="term" value="P:aerobic respiration"/>
    <property type="evidence" value="ECO:0007669"/>
    <property type="project" value="TreeGrafter"/>
</dbReference>
<dbReference type="HAMAP" id="MF_01350">
    <property type="entry name" value="NDH1_NuoH"/>
    <property type="match status" value="1"/>
</dbReference>
<dbReference type="InterPro" id="IPR001694">
    <property type="entry name" value="NADH_UbQ_OxRdtase_su1/FPO"/>
</dbReference>
<dbReference type="InterPro" id="IPR018086">
    <property type="entry name" value="NADH_UbQ_OxRdtase_su1_CS"/>
</dbReference>
<dbReference type="NCBIfam" id="NF004741">
    <property type="entry name" value="PRK06076.1-2"/>
    <property type="match status" value="1"/>
</dbReference>
<dbReference type="PANTHER" id="PTHR11432">
    <property type="entry name" value="NADH DEHYDROGENASE SUBUNIT 1"/>
    <property type="match status" value="1"/>
</dbReference>
<dbReference type="PANTHER" id="PTHR11432:SF3">
    <property type="entry name" value="NADH-UBIQUINONE OXIDOREDUCTASE CHAIN 1"/>
    <property type="match status" value="1"/>
</dbReference>
<dbReference type="Pfam" id="PF00146">
    <property type="entry name" value="NADHdh"/>
    <property type="match status" value="1"/>
</dbReference>
<dbReference type="PROSITE" id="PS00667">
    <property type="entry name" value="COMPLEX1_ND1_1"/>
    <property type="match status" value="1"/>
</dbReference>
<dbReference type="PROSITE" id="PS00668">
    <property type="entry name" value="COMPLEX1_ND1_2"/>
    <property type="match status" value="1"/>
</dbReference>
<keyword id="KW-0997">Cell inner membrane</keyword>
<keyword id="KW-1003">Cell membrane</keyword>
<keyword id="KW-0472">Membrane</keyword>
<keyword id="KW-0520">NAD</keyword>
<keyword id="KW-0874">Quinone</keyword>
<keyword id="KW-1185">Reference proteome</keyword>
<keyword id="KW-1278">Translocase</keyword>
<keyword id="KW-0812">Transmembrane</keyword>
<keyword id="KW-1133">Transmembrane helix</keyword>
<keyword id="KW-0830">Ubiquinone</keyword>
<proteinExistence type="inferred from homology"/>
<comment type="function">
    <text evidence="1">NDH-1 shuttles electrons from NADH, via FMN and iron-sulfur (Fe-S) centers, to quinones in the respiratory chain. The immediate electron acceptor for the enzyme in this species is believed to be ubiquinone. Couples the redox reaction to proton translocation (for every two electrons transferred, four hydrogen ions are translocated across the cytoplasmic membrane), and thus conserves the redox energy in a proton gradient. This subunit may bind ubiquinone.</text>
</comment>
<comment type="catalytic activity">
    <reaction evidence="1">
        <text>a quinone + NADH + 5 H(+)(in) = a quinol + NAD(+) + 4 H(+)(out)</text>
        <dbReference type="Rhea" id="RHEA:57888"/>
        <dbReference type="ChEBI" id="CHEBI:15378"/>
        <dbReference type="ChEBI" id="CHEBI:24646"/>
        <dbReference type="ChEBI" id="CHEBI:57540"/>
        <dbReference type="ChEBI" id="CHEBI:57945"/>
        <dbReference type="ChEBI" id="CHEBI:132124"/>
    </reaction>
</comment>
<comment type="subunit">
    <text evidence="1">NDH-1 is composed of 14 different subunits. Subunits NuoA, H, J, K, L, M, N constitute the membrane sector of the complex.</text>
</comment>
<comment type="subcellular location">
    <subcellularLocation>
        <location evidence="1">Cell inner membrane</location>
        <topology evidence="1">Multi-pass membrane protein</topology>
    </subcellularLocation>
</comment>
<comment type="similarity">
    <text evidence="1">Belongs to the complex I subunit 1 family.</text>
</comment>
<feature type="chain" id="PRO_0000298825" description="NADH-quinone oxidoreductase subunit H">
    <location>
        <begin position="1"/>
        <end position="339"/>
    </location>
</feature>
<feature type="transmembrane region" description="Helical" evidence="1">
    <location>
        <begin position="19"/>
        <end position="39"/>
    </location>
</feature>
<feature type="transmembrane region" description="Helical" evidence="1">
    <location>
        <begin position="87"/>
        <end position="107"/>
    </location>
</feature>
<feature type="transmembrane region" description="Helical" evidence="1">
    <location>
        <begin position="120"/>
        <end position="140"/>
    </location>
</feature>
<feature type="transmembrane region" description="Helical" evidence="1">
    <location>
        <begin position="153"/>
        <end position="173"/>
    </location>
</feature>
<feature type="transmembrane region" description="Helical" evidence="1">
    <location>
        <begin position="191"/>
        <end position="211"/>
    </location>
</feature>
<feature type="transmembrane region" description="Helical" evidence="1">
    <location>
        <begin position="253"/>
        <end position="273"/>
    </location>
</feature>
<feature type="transmembrane region" description="Helical" evidence="1">
    <location>
        <begin position="275"/>
        <end position="295"/>
    </location>
</feature>
<feature type="transmembrane region" description="Helical" evidence="1">
    <location>
        <begin position="310"/>
        <end position="330"/>
    </location>
</feature>
<sequence>MIAEMQTMLGPLWPVAWNLLKIIAIVGPLMGAVAYLTLAERKVIGFMQVRMGPNRVGYRGLLQPLADGVKLLMKEIIIPSAASRTLFLLGPVLAIAPALAAWAVVPFDLTLVLADIDAGLLYILAMTSVGVYGVIIAGWASNSKYAFLGAMRSAAQIVSYEIAMGFALVGVLMSANSLNLGKIVLAQSGGFWEWYWLPLFPLFIVYFISAVAETNRAPFDVAEGESEIVAGFHVEYSGMAFAVFFLAEYANMILVAMLAALMFLGGWLSPVPFLPDSILWLLFKVAALLFFFLWFRATFPRYRYDQIMRLGWKVFIPVTLVWILFVGAMMQTRWAYLFH</sequence>
<accession>Q1GZL6</accession>
<protein>
    <recommendedName>
        <fullName evidence="1">NADH-quinone oxidoreductase subunit H</fullName>
        <ecNumber evidence="1">7.1.1.-</ecNumber>
    </recommendedName>
    <alternativeName>
        <fullName evidence="1">NADH dehydrogenase I subunit H</fullName>
    </alternativeName>
    <alternativeName>
        <fullName evidence="1">NDH-1 subunit H</fullName>
    </alternativeName>
</protein>
<evidence type="ECO:0000255" key="1">
    <source>
        <dbReference type="HAMAP-Rule" id="MF_01350"/>
    </source>
</evidence>
<name>NUOH_METFK</name>
<reference key="1">
    <citation type="submission" date="2006-03" db="EMBL/GenBank/DDBJ databases">
        <title>Complete sequence of Methylobacillus flagellatus KT.</title>
        <authorList>
            <consortium name="US DOE Joint Genome Institute"/>
            <person name="Copeland A."/>
            <person name="Lucas S."/>
            <person name="Lapidus A."/>
            <person name="Barry K."/>
            <person name="Detter J.C."/>
            <person name="Glavina del Rio T."/>
            <person name="Hammon N."/>
            <person name="Israni S."/>
            <person name="Dalin E."/>
            <person name="Tice H."/>
            <person name="Pitluck S."/>
            <person name="Brettin T."/>
            <person name="Bruce D."/>
            <person name="Han C."/>
            <person name="Tapia R."/>
            <person name="Saunders E."/>
            <person name="Gilna P."/>
            <person name="Schmutz J."/>
            <person name="Larimer F."/>
            <person name="Land M."/>
            <person name="Kyrpides N."/>
            <person name="Anderson I."/>
            <person name="Richardson P."/>
        </authorList>
    </citation>
    <scope>NUCLEOTIDE SEQUENCE [LARGE SCALE GENOMIC DNA]</scope>
    <source>
        <strain>ATCC 51484 / DSM 6875 / VKM B-1610 / KT</strain>
    </source>
</reference>
<gene>
    <name evidence="1" type="primary">nuoH</name>
    <name type="ordered locus">Mfla_2054</name>
</gene>